<dbReference type="EC" id="2.7.11.1"/>
<dbReference type="EMBL" id="AY332225">
    <property type="protein sequence ID" value="AAP93639.1"/>
    <property type="molecule type" value="Genomic_DNA"/>
</dbReference>
<dbReference type="EMBL" id="CM001234">
    <property type="protein sequence ID" value="EHA50746.1"/>
    <property type="molecule type" value="Genomic_DNA"/>
</dbReference>
<dbReference type="RefSeq" id="XP_003717065.1">
    <property type="nucleotide sequence ID" value="XM_003717017.1"/>
</dbReference>
<dbReference type="SMR" id="Q7Z8E9"/>
<dbReference type="FunCoup" id="Q7Z8E9">
    <property type="interactions" value="369"/>
</dbReference>
<dbReference type="STRING" id="242507.Q7Z8E9"/>
<dbReference type="EnsemblFungi" id="MGG_12821T0">
    <property type="protein sequence ID" value="MGG_12821T0"/>
    <property type="gene ID" value="MGG_12821"/>
</dbReference>
<dbReference type="GeneID" id="5050191"/>
<dbReference type="KEGG" id="mgr:MGG_12821"/>
<dbReference type="VEuPathDB" id="FungiDB:MGG_12821"/>
<dbReference type="eggNOG" id="KOG0578">
    <property type="taxonomic scope" value="Eukaryota"/>
</dbReference>
<dbReference type="HOGENOM" id="CLU_000288_26_1_1"/>
<dbReference type="InParanoid" id="Q7Z8E9"/>
<dbReference type="OMA" id="MVDIMKF"/>
<dbReference type="OrthoDB" id="248923at2759"/>
<dbReference type="PHI-base" id="PHI:518"/>
<dbReference type="Proteomes" id="UP000009058">
    <property type="component" value="Chromosome 4"/>
</dbReference>
<dbReference type="GO" id="GO:0005737">
    <property type="term" value="C:cytoplasm"/>
    <property type="evidence" value="ECO:0007669"/>
    <property type="project" value="UniProtKB-SubCell"/>
</dbReference>
<dbReference type="GO" id="GO:0000131">
    <property type="term" value="C:incipient cellular bud site"/>
    <property type="evidence" value="ECO:0007669"/>
    <property type="project" value="EnsemblFungi"/>
</dbReference>
<dbReference type="GO" id="GO:0043332">
    <property type="term" value="C:mating projection tip"/>
    <property type="evidence" value="ECO:0007669"/>
    <property type="project" value="EnsemblFungi"/>
</dbReference>
<dbReference type="GO" id="GO:0005634">
    <property type="term" value="C:nucleus"/>
    <property type="evidence" value="ECO:0007669"/>
    <property type="project" value="UniProtKB-SubCell"/>
</dbReference>
<dbReference type="GO" id="GO:0005524">
    <property type="term" value="F:ATP binding"/>
    <property type="evidence" value="ECO:0007669"/>
    <property type="project" value="UniProtKB-KW"/>
</dbReference>
<dbReference type="GO" id="GO:0044025">
    <property type="term" value="F:histone H2BS14 kinase activity"/>
    <property type="evidence" value="ECO:0007669"/>
    <property type="project" value="EnsemblFungi"/>
</dbReference>
<dbReference type="GO" id="GO:0008349">
    <property type="term" value="F:MAP kinase kinase kinase kinase activity"/>
    <property type="evidence" value="ECO:0007669"/>
    <property type="project" value="EnsemblFungi"/>
</dbReference>
<dbReference type="GO" id="GO:0106310">
    <property type="term" value="F:protein serine kinase activity"/>
    <property type="evidence" value="ECO:0007669"/>
    <property type="project" value="RHEA"/>
</dbReference>
<dbReference type="GO" id="GO:0007121">
    <property type="term" value="P:bipolar cellular bud site selection"/>
    <property type="evidence" value="ECO:0007669"/>
    <property type="project" value="EnsemblFungi"/>
</dbReference>
<dbReference type="GO" id="GO:0007118">
    <property type="term" value="P:budding cell apical bud growth"/>
    <property type="evidence" value="ECO:0007669"/>
    <property type="project" value="EnsemblFungi"/>
</dbReference>
<dbReference type="GO" id="GO:0070301">
    <property type="term" value="P:cellular response to hydrogen peroxide"/>
    <property type="evidence" value="ECO:0007669"/>
    <property type="project" value="EnsemblFungi"/>
</dbReference>
<dbReference type="GO" id="GO:0001403">
    <property type="term" value="P:invasive growth in response to glucose limitation"/>
    <property type="evidence" value="ECO:0007669"/>
    <property type="project" value="EnsemblFungi"/>
</dbReference>
<dbReference type="GO" id="GO:0010629">
    <property type="term" value="P:negative regulation of gene expression"/>
    <property type="evidence" value="ECO:0007669"/>
    <property type="project" value="EnsemblFungi"/>
</dbReference>
<dbReference type="GO" id="GO:2000910">
    <property type="term" value="P:negative regulation of sterol import"/>
    <property type="evidence" value="ECO:0007669"/>
    <property type="project" value="EnsemblFungi"/>
</dbReference>
<dbReference type="GO" id="GO:0000122">
    <property type="term" value="P:negative regulation of transcription by RNA polymerase II"/>
    <property type="evidence" value="ECO:0007669"/>
    <property type="project" value="EnsemblFungi"/>
</dbReference>
<dbReference type="GO" id="GO:0007232">
    <property type="term" value="P:osmosensory signaling pathway via Sho1 osmosensor"/>
    <property type="evidence" value="ECO:0007669"/>
    <property type="project" value="EnsemblFungi"/>
</dbReference>
<dbReference type="GO" id="GO:0000750">
    <property type="term" value="P:pheromone-dependent signal transduction involved in conjugation with cellular fusion"/>
    <property type="evidence" value="ECO:0007669"/>
    <property type="project" value="EnsemblFungi"/>
</dbReference>
<dbReference type="GO" id="GO:0043065">
    <property type="term" value="P:positive regulation of apoptotic process"/>
    <property type="evidence" value="ECO:0007669"/>
    <property type="project" value="EnsemblFungi"/>
</dbReference>
<dbReference type="GO" id="GO:0051094">
    <property type="term" value="P:positive regulation of developmental process"/>
    <property type="evidence" value="ECO:0007669"/>
    <property type="project" value="UniProtKB-ARBA"/>
</dbReference>
<dbReference type="GO" id="GO:0007124">
    <property type="term" value="P:pseudohyphal growth"/>
    <property type="evidence" value="ECO:0007669"/>
    <property type="project" value="EnsemblFungi"/>
</dbReference>
<dbReference type="GO" id="GO:0007096">
    <property type="term" value="P:regulation of exit from mitosis"/>
    <property type="evidence" value="ECO:0007669"/>
    <property type="project" value="EnsemblFungi"/>
</dbReference>
<dbReference type="GO" id="GO:0001402">
    <property type="term" value="P:signal transduction involved in filamentous growth"/>
    <property type="evidence" value="ECO:0007669"/>
    <property type="project" value="EnsemblFungi"/>
</dbReference>
<dbReference type="GO" id="GO:0035376">
    <property type="term" value="P:sterol import"/>
    <property type="evidence" value="ECO:0007669"/>
    <property type="project" value="EnsemblFungi"/>
</dbReference>
<dbReference type="GO" id="GO:0034063">
    <property type="term" value="P:stress granule assembly"/>
    <property type="evidence" value="ECO:0007669"/>
    <property type="project" value="EnsemblFungi"/>
</dbReference>
<dbReference type="GO" id="GO:0000011">
    <property type="term" value="P:vacuole inheritance"/>
    <property type="evidence" value="ECO:0007669"/>
    <property type="project" value="EnsemblFungi"/>
</dbReference>
<dbReference type="CDD" id="cd01093">
    <property type="entry name" value="CRIB_PAK_like"/>
    <property type="match status" value="1"/>
</dbReference>
<dbReference type="CDD" id="cd06614">
    <property type="entry name" value="STKc_PAK"/>
    <property type="match status" value="1"/>
</dbReference>
<dbReference type="FunFam" id="1.10.510.10:FF:000011">
    <property type="entry name" value="Non-specific serine/threonine protein kinase"/>
    <property type="match status" value="1"/>
</dbReference>
<dbReference type="FunFam" id="3.30.200.20:FF:000385">
    <property type="entry name" value="Non-specific serine/threonine protein kinase"/>
    <property type="match status" value="1"/>
</dbReference>
<dbReference type="Gene3D" id="3.90.810.10">
    <property type="entry name" value="CRIB domain"/>
    <property type="match status" value="1"/>
</dbReference>
<dbReference type="Gene3D" id="3.30.200.20">
    <property type="entry name" value="Phosphorylase Kinase, domain 1"/>
    <property type="match status" value="1"/>
</dbReference>
<dbReference type="Gene3D" id="1.10.510.10">
    <property type="entry name" value="Transferase(Phosphotransferase) domain 1"/>
    <property type="match status" value="1"/>
</dbReference>
<dbReference type="InterPro" id="IPR000095">
    <property type="entry name" value="CRIB_dom"/>
</dbReference>
<dbReference type="InterPro" id="IPR036936">
    <property type="entry name" value="CRIB_dom_sf"/>
</dbReference>
<dbReference type="InterPro" id="IPR011009">
    <property type="entry name" value="Kinase-like_dom_sf"/>
</dbReference>
<dbReference type="InterPro" id="IPR051931">
    <property type="entry name" value="PAK3-like"/>
</dbReference>
<dbReference type="InterPro" id="IPR033923">
    <property type="entry name" value="PAK_BD"/>
</dbReference>
<dbReference type="InterPro" id="IPR000719">
    <property type="entry name" value="Prot_kinase_dom"/>
</dbReference>
<dbReference type="InterPro" id="IPR017441">
    <property type="entry name" value="Protein_kinase_ATP_BS"/>
</dbReference>
<dbReference type="InterPro" id="IPR008271">
    <property type="entry name" value="Ser/Thr_kinase_AS"/>
</dbReference>
<dbReference type="PANTHER" id="PTHR45832">
    <property type="entry name" value="SERINE/THREONINE-PROTEIN KINASE SAMKA-RELATED-RELATED"/>
    <property type="match status" value="1"/>
</dbReference>
<dbReference type="PANTHER" id="PTHR45832:SF22">
    <property type="entry name" value="SERINE_THREONINE-PROTEIN KINASE SAMKA-RELATED"/>
    <property type="match status" value="1"/>
</dbReference>
<dbReference type="Pfam" id="PF00786">
    <property type="entry name" value="PBD"/>
    <property type="match status" value="1"/>
</dbReference>
<dbReference type="Pfam" id="PF00069">
    <property type="entry name" value="Pkinase"/>
    <property type="match status" value="1"/>
</dbReference>
<dbReference type="SMART" id="SM00285">
    <property type="entry name" value="PBD"/>
    <property type="match status" value="1"/>
</dbReference>
<dbReference type="SMART" id="SM00220">
    <property type="entry name" value="S_TKc"/>
    <property type="match status" value="1"/>
</dbReference>
<dbReference type="SUPFAM" id="SSF56112">
    <property type="entry name" value="Protein kinase-like (PK-like)"/>
    <property type="match status" value="1"/>
</dbReference>
<dbReference type="PROSITE" id="PS50108">
    <property type="entry name" value="CRIB"/>
    <property type="match status" value="1"/>
</dbReference>
<dbReference type="PROSITE" id="PS00107">
    <property type="entry name" value="PROTEIN_KINASE_ATP"/>
    <property type="match status" value="1"/>
</dbReference>
<dbReference type="PROSITE" id="PS50011">
    <property type="entry name" value="PROTEIN_KINASE_DOM"/>
    <property type="match status" value="1"/>
</dbReference>
<dbReference type="PROSITE" id="PS00108">
    <property type="entry name" value="PROTEIN_KINASE_ST"/>
    <property type="match status" value="1"/>
</dbReference>
<proteinExistence type="inferred from homology"/>
<comment type="function">
    <text evidence="1 6">MAP4K component of the MAPK pathway required for the mating pheromone response and the regulation of cell polarity and cell cycle. Phosphorylates histone H2B to form H2BS10ph (By similarity). Is involved in conidiation, aerial hyphal growth and infection-related morphogenesis.</text>
</comment>
<comment type="catalytic activity">
    <reaction>
        <text>L-seryl-[protein] + ATP = O-phospho-L-seryl-[protein] + ADP + H(+)</text>
        <dbReference type="Rhea" id="RHEA:17989"/>
        <dbReference type="Rhea" id="RHEA-COMP:9863"/>
        <dbReference type="Rhea" id="RHEA-COMP:11604"/>
        <dbReference type="ChEBI" id="CHEBI:15378"/>
        <dbReference type="ChEBI" id="CHEBI:29999"/>
        <dbReference type="ChEBI" id="CHEBI:30616"/>
        <dbReference type="ChEBI" id="CHEBI:83421"/>
        <dbReference type="ChEBI" id="CHEBI:456216"/>
        <dbReference type="EC" id="2.7.11.1"/>
    </reaction>
</comment>
<comment type="catalytic activity">
    <reaction>
        <text>L-threonyl-[protein] + ATP = O-phospho-L-threonyl-[protein] + ADP + H(+)</text>
        <dbReference type="Rhea" id="RHEA:46608"/>
        <dbReference type="Rhea" id="RHEA-COMP:11060"/>
        <dbReference type="Rhea" id="RHEA-COMP:11605"/>
        <dbReference type="ChEBI" id="CHEBI:15378"/>
        <dbReference type="ChEBI" id="CHEBI:30013"/>
        <dbReference type="ChEBI" id="CHEBI:30616"/>
        <dbReference type="ChEBI" id="CHEBI:61977"/>
        <dbReference type="ChEBI" id="CHEBI:456216"/>
        <dbReference type="EC" id="2.7.11.1"/>
    </reaction>
</comment>
<comment type="subcellular location">
    <subcellularLocation>
        <location evidence="1">Cytoplasm</location>
    </subcellularLocation>
    <subcellularLocation>
        <location evidence="1">Nucleus</location>
    </subcellularLocation>
</comment>
<comment type="similarity">
    <text evidence="7">Belongs to the protein kinase superfamily. STE Ser/Thr protein kinase family. STE20 subfamily.</text>
</comment>
<gene>
    <name type="primary">MST20</name>
    <name type="synonym">STE20</name>
    <name type="ORF">MGG_12821</name>
</gene>
<name>STE20_PYRO7</name>
<reference key="1">
    <citation type="journal article" date="2004" name="Mol. Plant Microbe Interact.">
        <title>Two PAK kinase genes, CHM1 and MST20, have distinct functions in Magnaporthe grisea.</title>
        <authorList>
            <person name="Li L."/>
            <person name="Xue C."/>
            <person name="Bruno K."/>
            <person name="Nishimura M."/>
            <person name="Xu J.-R."/>
        </authorList>
    </citation>
    <scope>NUCLEOTIDE SEQUENCE [GENOMIC DNA]</scope>
    <scope>FUNCTION</scope>
    <source>
        <strain>Guyane 11</strain>
    </source>
</reference>
<reference key="2">
    <citation type="journal article" date="2005" name="Nature">
        <title>The genome sequence of the rice blast fungus Magnaporthe grisea.</title>
        <authorList>
            <person name="Dean R.A."/>
            <person name="Talbot N.J."/>
            <person name="Ebbole D.J."/>
            <person name="Farman M.L."/>
            <person name="Mitchell T.K."/>
            <person name="Orbach M.J."/>
            <person name="Thon M.R."/>
            <person name="Kulkarni R."/>
            <person name="Xu J.-R."/>
            <person name="Pan H."/>
            <person name="Read N.D."/>
            <person name="Lee Y.-H."/>
            <person name="Carbone I."/>
            <person name="Brown D."/>
            <person name="Oh Y.Y."/>
            <person name="Donofrio N."/>
            <person name="Jeong J.S."/>
            <person name="Soanes D.M."/>
            <person name="Djonovic S."/>
            <person name="Kolomiets E."/>
            <person name="Rehmeyer C."/>
            <person name="Li W."/>
            <person name="Harding M."/>
            <person name="Kim S."/>
            <person name="Lebrun M.-H."/>
            <person name="Bohnert H."/>
            <person name="Coughlan S."/>
            <person name="Butler J."/>
            <person name="Calvo S.E."/>
            <person name="Ma L.-J."/>
            <person name="Nicol R."/>
            <person name="Purcell S."/>
            <person name="Nusbaum C."/>
            <person name="Galagan J.E."/>
            <person name="Birren B.W."/>
        </authorList>
    </citation>
    <scope>NUCLEOTIDE SEQUENCE [LARGE SCALE GENOMIC DNA]</scope>
    <source>
        <strain>70-15 / ATCC MYA-4617 / FGSC 8958</strain>
    </source>
</reference>
<sequence length="914" mass="100249">MDGHSNFTQPSDTSHASHTIPSSSSSQRRRLTKKPPPSTSARHHHSSLSIDSRVDAQSLVGKRSSTSLRRAPSAPPARTPTSTHASNSSSPRNPSSSTRLNNHSPIIPAASEFAASSLSPSARDRDSDPARNDHGHQLQNNNNYYYSAFTNAHHHNQYSAASHRRSNSYGHPHGPQSSNSLTFNHSEDFIGAPFDGSAILNRIEATKASPTLGSGAFPHISNPIPVGAAAPAQYSRGSPALEQSFTFPSAAMSEKSQQVRGMEAQLPTSKRYSDETKEPKPGVLRKKSGFSGFMSGLVGTPKKPLISAPENPVHVTHVGYDSATGQFTGLPKEWQRLISESGITEKERRENPETLVNVIKFYKETTEKPAEDQVLEKFHDARPGLPSAPSAGSMISPGLAPHHYNPMSPMISPPASPRFPQVGHEGNFENPRSPPPVPKNKDVTLMPSRPAPRPPVSLPTRTAPHAPYAAKDSGIDMPPQHDDLTPTTYQPPKESQPILPEEHRSRSNSRVNGNTAYPASQQSPAVQAAYQQQLMQQQQEQALAQAQASMSGSMSRAPSKRQPQAQQPTPPQSQHQYSRPTDANGAQQTQRPQQPQIGPVPQSRPRHRSRQSNGLDVVAALKRICSEGDPREIYRSFTKIGQGASGGVYTGHERGSNRLVAIKQMNLEQQPKKDLIINEILVMKDSSHPNIVNFIDSYLCGGELWVVMEFMEGGSLTDVVTFNIMTEGQIASVCRETLLGLQHLHSKGVIHRDIKSDNILLSMEGNIKLTDFGFCATINEAQNKRTTMVGTPYWMAPEVVTRKEYGRKVDIWSLGIMAIEMIEGEPPYLTESPLRALWLIATNGTPQIKDEGNMSPVFRDFLYFALKVDPDKRASAHDLLRHEFMNLCVDLSHLSPLVRAAREARAQEKARKGQ</sequence>
<keyword id="KW-0067">ATP-binding</keyword>
<keyword id="KW-0963">Cytoplasm</keyword>
<keyword id="KW-0418">Kinase</keyword>
<keyword id="KW-0547">Nucleotide-binding</keyword>
<keyword id="KW-0539">Nucleus</keyword>
<keyword id="KW-0589">Pheromone response</keyword>
<keyword id="KW-1185">Reference proteome</keyword>
<keyword id="KW-0723">Serine/threonine-protein kinase</keyword>
<keyword id="KW-0808">Transferase</keyword>
<organism>
    <name type="scientific">Pyricularia oryzae (strain 70-15 / ATCC MYA-4617 / FGSC 8958)</name>
    <name type="common">Rice blast fungus</name>
    <name type="synonym">Magnaporthe oryzae</name>
    <dbReference type="NCBI Taxonomy" id="242507"/>
    <lineage>
        <taxon>Eukaryota</taxon>
        <taxon>Fungi</taxon>
        <taxon>Dikarya</taxon>
        <taxon>Ascomycota</taxon>
        <taxon>Pezizomycotina</taxon>
        <taxon>Sordariomycetes</taxon>
        <taxon>Sordariomycetidae</taxon>
        <taxon>Magnaporthales</taxon>
        <taxon>Pyriculariaceae</taxon>
        <taxon>Pyricularia</taxon>
    </lineage>
</organism>
<evidence type="ECO:0000250" key="1"/>
<evidence type="ECO:0000255" key="2">
    <source>
        <dbReference type="PROSITE-ProRule" id="PRU00057"/>
    </source>
</evidence>
<evidence type="ECO:0000255" key="3">
    <source>
        <dbReference type="PROSITE-ProRule" id="PRU00159"/>
    </source>
</evidence>
<evidence type="ECO:0000255" key="4">
    <source>
        <dbReference type="PROSITE-ProRule" id="PRU10027"/>
    </source>
</evidence>
<evidence type="ECO:0000256" key="5">
    <source>
        <dbReference type="SAM" id="MobiDB-lite"/>
    </source>
</evidence>
<evidence type="ECO:0000269" key="6">
    <source>
    </source>
</evidence>
<evidence type="ECO:0000305" key="7"/>
<accession>Q7Z8E9</accession>
<accession>A4R8E8</accession>
<accession>G4N6Y2</accession>
<feature type="chain" id="PRO_0000237633" description="Serine/threonine-protein kinase MST20">
    <location>
        <begin position="1"/>
        <end position="914"/>
    </location>
</feature>
<feature type="domain" description="CRIB" evidence="2">
    <location>
        <begin position="306"/>
        <end position="319"/>
    </location>
</feature>
<feature type="domain" description="Protein kinase" evidence="3">
    <location>
        <begin position="634"/>
        <end position="885"/>
    </location>
</feature>
<feature type="region of interest" description="Disordered" evidence="5">
    <location>
        <begin position="1"/>
        <end position="140"/>
    </location>
</feature>
<feature type="region of interest" description="Disordered" evidence="5">
    <location>
        <begin position="156"/>
        <end position="184"/>
    </location>
</feature>
<feature type="region of interest" description="Disordered" evidence="5">
    <location>
        <begin position="251"/>
        <end position="286"/>
    </location>
</feature>
<feature type="region of interest" description="Disordered" evidence="5">
    <location>
        <begin position="408"/>
        <end position="615"/>
    </location>
</feature>
<feature type="compositionally biased region" description="Polar residues" evidence="5">
    <location>
        <begin position="1"/>
        <end position="12"/>
    </location>
</feature>
<feature type="compositionally biased region" description="Low complexity" evidence="5">
    <location>
        <begin position="13"/>
        <end position="26"/>
    </location>
</feature>
<feature type="compositionally biased region" description="Low complexity" evidence="5">
    <location>
        <begin position="63"/>
        <end position="72"/>
    </location>
</feature>
<feature type="compositionally biased region" description="Low complexity" evidence="5">
    <location>
        <begin position="79"/>
        <end position="97"/>
    </location>
</feature>
<feature type="compositionally biased region" description="Basic and acidic residues" evidence="5">
    <location>
        <begin position="122"/>
        <end position="136"/>
    </location>
</feature>
<feature type="compositionally biased region" description="Basic residues" evidence="5">
    <location>
        <begin position="156"/>
        <end position="166"/>
    </location>
</feature>
<feature type="compositionally biased region" description="Polar residues" evidence="5">
    <location>
        <begin position="175"/>
        <end position="184"/>
    </location>
</feature>
<feature type="compositionally biased region" description="Basic and acidic residues" evidence="5">
    <location>
        <begin position="271"/>
        <end position="280"/>
    </location>
</feature>
<feature type="compositionally biased region" description="Low complexity" evidence="5">
    <location>
        <begin position="516"/>
        <end position="548"/>
    </location>
</feature>
<feature type="compositionally biased region" description="Low complexity" evidence="5">
    <location>
        <begin position="562"/>
        <end position="576"/>
    </location>
</feature>
<feature type="compositionally biased region" description="Polar residues" evidence="5">
    <location>
        <begin position="577"/>
        <end position="586"/>
    </location>
</feature>
<feature type="compositionally biased region" description="Low complexity" evidence="5">
    <location>
        <begin position="587"/>
        <end position="596"/>
    </location>
</feature>
<feature type="active site" description="Proton acceptor" evidence="3 4">
    <location>
        <position position="753"/>
    </location>
</feature>
<feature type="binding site" evidence="3">
    <location>
        <begin position="640"/>
        <end position="648"/>
    </location>
    <ligand>
        <name>ATP</name>
        <dbReference type="ChEBI" id="CHEBI:30616"/>
    </ligand>
</feature>
<feature type="binding site" evidence="3">
    <location>
        <position position="663"/>
    </location>
    <ligand>
        <name>ATP</name>
        <dbReference type="ChEBI" id="CHEBI:30616"/>
    </ligand>
</feature>
<feature type="sequence variant" description="In strain: Guyane 11.">
    <original>S</original>
    <variation>R</variation>
    <location>
        <position position="253"/>
    </location>
</feature>
<protein>
    <recommendedName>
        <fullName>Serine/threonine-protein kinase MST20</fullName>
        <ecNumber>2.7.11.1</ecNumber>
    </recommendedName>
</protein>